<protein>
    <recommendedName>
        <fullName evidence="1">C(7)-cyclitol 7-kinase</fullName>
        <ecNumber evidence="1">2.7.1.214</ecNumber>
    </recommendedName>
</protein>
<organism>
    <name type="scientific">Streptomyces hygroscopicus subsp. limoneus</name>
    <dbReference type="NCBI Taxonomy" id="264445"/>
    <lineage>
        <taxon>Bacteria</taxon>
        <taxon>Bacillati</taxon>
        <taxon>Actinomycetota</taxon>
        <taxon>Actinomycetes</taxon>
        <taxon>Kitasatosporales</taxon>
        <taxon>Streptomycetaceae</taxon>
        <taxon>Streptomyces</taxon>
        <taxon>Streptomyces violaceusniger group</taxon>
    </lineage>
</organism>
<gene>
    <name evidence="4" type="primary">vldC</name>
    <name evidence="5" type="ORF">SHL15_8010</name>
</gene>
<sequence length="351" mass="35935">MTALTPAPCDLVVADLGGTTLRVGRITAGTSEVHDVKRVPTNGLGRYGALAPQELQDRVMEQLTREIAAHLNRPGQAPAQAVAVSFAGPMTADGVVLAGPTLWGGPAAPLPVADVLTQQLGLPVVAANDVTAAAWRYAAAEPEPFCLTTVSSGIGNKVFRHGEIVIDQLGYGGEIGHWLVDHAEDAAPCECGGRGHLGAIASGRGALFAVRAAAAADASAFARSALAGPSGGVPEAITNEAFAAAARAGDTFARESLRRSLRPLASAVSLLFTAIGVRRYLFVGGFALALGDTFLTLLGDELVRVGCFGLDEYATRAMLALGEDDDDHCLIGIGQLAAARLGAPRAVEVTA</sequence>
<evidence type="ECO:0000250" key="1">
    <source>
        <dbReference type="UniProtKB" id="Q3T6E2"/>
    </source>
</evidence>
<evidence type="ECO:0000269" key="2">
    <source>
    </source>
</evidence>
<evidence type="ECO:0000305" key="3"/>
<evidence type="ECO:0000312" key="4">
    <source>
        <dbReference type="EMBL" id="ABC67265.1"/>
    </source>
</evidence>
<evidence type="ECO:0000312" key="5">
    <source>
        <dbReference type="EMBL" id="ALO98987.1"/>
    </source>
</evidence>
<feature type="chain" id="PRO_0000443534" description="C(7)-cyclitol 7-kinase">
    <location>
        <begin position="1"/>
        <end position="351"/>
    </location>
</feature>
<accession>Q15JG5</accession>
<reference key="1">
    <citation type="journal article" date="2006" name="Gene">
        <title>Genetic localization and heterologous expression of validamycin biosynthetic gene cluster isolated from Streptomyces hygroscopicus var. limoneus KCCM 11405 (IFO 12704).</title>
        <authorList>
            <person name="Singh D."/>
            <person name="Seo M.J."/>
            <person name="Kwon H.J."/>
            <person name="Rajkarnikar A."/>
            <person name="Kim K.R."/>
            <person name="Kim S.O."/>
            <person name="Suh J.W."/>
        </authorList>
    </citation>
    <scope>NUCLEOTIDE SEQUENCE [GENOMIC DNA]</scope>
    <scope>FUNCTION</scope>
    <source>
        <strain>ATCC 21432 / NBRC 12704 / KCTC 1717 / KCCM 11405</strain>
    </source>
</reference>
<reference key="2">
    <citation type="submission" date="2015-11" db="EMBL/GenBank/DDBJ databases">
        <authorList>
            <person name="Kim K.M."/>
        </authorList>
    </citation>
    <scope>NUCLEOTIDE SEQUENCE [LARGE SCALE GENOMIC DNA]</scope>
    <source>
        <strain>ATCC 21432 / NBRC 12704 / KCTC 1717 / KCCM 11405</strain>
    </source>
</reference>
<comment type="function">
    <text evidence="1 2">Involved in the biosynthesis of the antifungal agent validamycin A (PubMed:16725283). Catalyzes the phosphorylation of valienone and validone to their 7-phosphate derivatives (By similarity).</text>
</comment>
<comment type="catalytic activity">
    <reaction evidence="1">
        <text>valienone + ATP = valienone 7-phosphate + ADP + H(+)</text>
        <dbReference type="Rhea" id="RHEA:49420"/>
        <dbReference type="ChEBI" id="CHEBI:15378"/>
        <dbReference type="ChEBI" id="CHEBI:30616"/>
        <dbReference type="ChEBI" id="CHEBI:111521"/>
        <dbReference type="ChEBI" id="CHEBI:111522"/>
        <dbReference type="ChEBI" id="CHEBI:456216"/>
        <dbReference type="EC" id="2.7.1.214"/>
    </reaction>
</comment>
<comment type="catalytic activity">
    <reaction evidence="1">
        <text>validone + ATP = validone 7-phosphate + ADP + H(+)</text>
        <dbReference type="Rhea" id="RHEA:49424"/>
        <dbReference type="ChEBI" id="CHEBI:15378"/>
        <dbReference type="ChEBI" id="CHEBI:30616"/>
        <dbReference type="ChEBI" id="CHEBI:111523"/>
        <dbReference type="ChEBI" id="CHEBI:111542"/>
        <dbReference type="ChEBI" id="CHEBI:456216"/>
        <dbReference type="EC" id="2.7.1.214"/>
    </reaction>
</comment>
<comment type="similarity">
    <text evidence="3">Belongs to the ROK (NagC/XylR) family.</text>
</comment>
<keyword id="KW-0045">Antibiotic biosynthesis</keyword>
<keyword id="KW-0418">Kinase</keyword>
<keyword id="KW-0808">Transferase</keyword>
<name>VLDC_STRHL</name>
<dbReference type="EC" id="2.7.1.214" evidence="1"/>
<dbReference type="EMBL" id="DQ223652">
    <property type="protein sequence ID" value="ABC67265.1"/>
    <property type="molecule type" value="Genomic_DNA"/>
</dbReference>
<dbReference type="EMBL" id="CP013220">
    <property type="protein sequence ID" value="ALO98987.1"/>
    <property type="molecule type" value="Genomic_DNA"/>
</dbReference>
<dbReference type="SMR" id="Q15JG5"/>
<dbReference type="PATRIC" id="fig|264445.3.peg.8523"/>
<dbReference type="BRENDA" id="2.7.1.214">
    <property type="organism ID" value="14504"/>
</dbReference>
<dbReference type="GO" id="GO:0016301">
    <property type="term" value="F:kinase activity"/>
    <property type="evidence" value="ECO:0007669"/>
    <property type="project" value="UniProtKB-KW"/>
</dbReference>
<dbReference type="GO" id="GO:0017000">
    <property type="term" value="P:antibiotic biosynthetic process"/>
    <property type="evidence" value="ECO:0007669"/>
    <property type="project" value="UniProtKB-KW"/>
</dbReference>
<dbReference type="Gene3D" id="3.30.420.40">
    <property type="match status" value="2"/>
</dbReference>
<dbReference type="InterPro" id="IPR043129">
    <property type="entry name" value="ATPase_NBD"/>
</dbReference>
<dbReference type="InterPro" id="IPR000600">
    <property type="entry name" value="ROK"/>
</dbReference>
<dbReference type="PANTHER" id="PTHR18964:SF149">
    <property type="entry name" value="BIFUNCTIONAL UDP-N-ACETYLGLUCOSAMINE 2-EPIMERASE_N-ACETYLMANNOSAMINE KINASE"/>
    <property type="match status" value="1"/>
</dbReference>
<dbReference type="PANTHER" id="PTHR18964">
    <property type="entry name" value="ROK (REPRESSOR, ORF, KINASE) FAMILY"/>
    <property type="match status" value="1"/>
</dbReference>
<dbReference type="Pfam" id="PF00480">
    <property type="entry name" value="ROK"/>
    <property type="match status" value="1"/>
</dbReference>
<dbReference type="SUPFAM" id="SSF53067">
    <property type="entry name" value="Actin-like ATPase domain"/>
    <property type="match status" value="1"/>
</dbReference>
<proteinExistence type="inferred from homology"/>